<accession>A3PAG5</accession>
<name>RIMO_PROM0</name>
<dbReference type="EC" id="2.8.4.4" evidence="1"/>
<dbReference type="EMBL" id="CP000576">
    <property type="protein sequence ID" value="ABO16740.1"/>
    <property type="molecule type" value="Genomic_DNA"/>
</dbReference>
<dbReference type="RefSeq" id="WP_011862145.1">
    <property type="nucleotide sequence ID" value="NC_009091.1"/>
</dbReference>
<dbReference type="SMR" id="A3PAG5"/>
<dbReference type="STRING" id="167546.P9301_01171"/>
<dbReference type="KEGG" id="pmg:P9301_01171"/>
<dbReference type="eggNOG" id="COG0621">
    <property type="taxonomic scope" value="Bacteria"/>
</dbReference>
<dbReference type="HOGENOM" id="CLU_018697_0_0_3"/>
<dbReference type="OrthoDB" id="9805215at2"/>
<dbReference type="Proteomes" id="UP000001430">
    <property type="component" value="Chromosome"/>
</dbReference>
<dbReference type="GO" id="GO:0005829">
    <property type="term" value="C:cytosol"/>
    <property type="evidence" value="ECO:0007669"/>
    <property type="project" value="TreeGrafter"/>
</dbReference>
<dbReference type="GO" id="GO:0051539">
    <property type="term" value="F:4 iron, 4 sulfur cluster binding"/>
    <property type="evidence" value="ECO:0007669"/>
    <property type="project" value="UniProtKB-UniRule"/>
</dbReference>
<dbReference type="GO" id="GO:0035599">
    <property type="term" value="F:aspartic acid methylthiotransferase activity"/>
    <property type="evidence" value="ECO:0007669"/>
    <property type="project" value="TreeGrafter"/>
</dbReference>
<dbReference type="GO" id="GO:0046872">
    <property type="term" value="F:metal ion binding"/>
    <property type="evidence" value="ECO:0007669"/>
    <property type="project" value="UniProtKB-KW"/>
</dbReference>
<dbReference type="GO" id="GO:0103039">
    <property type="term" value="F:protein methylthiotransferase activity"/>
    <property type="evidence" value="ECO:0007669"/>
    <property type="project" value="UniProtKB-EC"/>
</dbReference>
<dbReference type="GO" id="GO:0006400">
    <property type="term" value="P:tRNA modification"/>
    <property type="evidence" value="ECO:0007669"/>
    <property type="project" value="InterPro"/>
</dbReference>
<dbReference type="CDD" id="cd01335">
    <property type="entry name" value="Radical_SAM"/>
    <property type="match status" value="1"/>
</dbReference>
<dbReference type="FunFam" id="3.40.50.12160:FF:000003">
    <property type="entry name" value="CDK5 regulatory subunit-associated protein 1"/>
    <property type="match status" value="1"/>
</dbReference>
<dbReference type="FunFam" id="3.80.30.20:FF:000001">
    <property type="entry name" value="tRNA-2-methylthio-N(6)-dimethylallyladenosine synthase 2"/>
    <property type="match status" value="1"/>
</dbReference>
<dbReference type="Gene3D" id="3.40.50.12160">
    <property type="entry name" value="Methylthiotransferase, N-terminal domain"/>
    <property type="match status" value="1"/>
</dbReference>
<dbReference type="Gene3D" id="2.40.50.140">
    <property type="entry name" value="Nucleic acid-binding proteins"/>
    <property type="match status" value="1"/>
</dbReference>
<dbReference type="Gene3D" id="3.80.30.20">
    <property type="entry name" value="tm_1862 like domain"/>
    <property type="match status" value="1"/>
</dbReference>
<dbReference type="HAMAP" id="MF_01865">
    <property type="entry name" value="MTTase_RimO"/>
    <property type="match status" value="1"/>
</dbReference>
<dbReference type="InterPro" id="IPR006638">
    <property type="entry name" value="Elp3/MiaA/NifB-like_rSAM"/>
</dbReference>
<dbReference type="InterPro" id="IPR005839">
    <property type="entry name" value="Methylthiotransferase"/>
</dbReference>
<dbReference type="InterPro" id="IPR020612">
    <property type="entry name" value="Methylthiotransferase_CS"/>
</dbReference>
<dbReference type="InterPro" id="IPR013848">
    <property type="entry name" value="Methylthiotransferase_N"/>
</dbReference>
<dbReference type="InterPro" id="IPR038135">
    <property type="entry name" value="Methylthiotransferase_N_sf"/>
</dbReference>
<dbReference type="InterPro" id="IPR012340">
    <property type="entry name" value="NA-bd_OB-fold"/>
</dbReference>
<dbReference type="InterPro" id="IPR005840">
    <property type="entry name" value="Ribosomal_uS12_MeSTrfase_RimO"/>
</dbReference>
<dbReference type="InterPro" id="IPR007197">
    <property type="entry name" value="rSAM"/>
</dbReference>
<dbReference type="InterPro" id="IPR023404">
    <property type="entry name" value="rSAM_horseshoe"/>
</dbReference>
<dbReference type="InterPro" id="IPR002792">
    <property type="entry name" value="TRAM_dom"/>
</dbReference>
<dbReference type="NCBIfam" id="TIGR01125">
    <property type="entry name" value="30S ribosomal protein S12 methylthiotransferase RimO"/>
    <property type="match status" value="1"/>
</dbReference>
<dbReference type="NCBIfam" id="TIGR00089">
    <property type="entry name" value="MiaB/RimO family radical SAM methylthiotransferase"/>
    <property type="match status" value="1"/>
</dbReference>
<dbReference type="PANTHER" id="PTHR43837">
    <property type="entry name" value="RIBOSOMAL PROTEIN S12 METHYLTHIOTRANSFERASE RIMO"/>
    <property type="match status" value="1"/>
</dbReference>
<dbReference type="PANTHER" id="PTHR43837:SF1">
    <property type="entry name" value="RIBOSOMAL PROTEIN US12 METHYLTHIOTRANSFERASE RIMO"/>
    <property type="match status" value="1"/>
</dbReference>
<dbReference type="Pfam" id="PF04055">
    <property type="entry name" value="Radical_SAM"/>
    <property type="match status" value="1"/>
</dbReference>
<dbReference type="Pfam" id="PF18693">
    <property type="entry name" value="TRAM_2"/>
    <property type="match status" value="1"/>
</dbReference>
<dbReference type="Pfam" id="PF00919">
    <property type="entry name" value="UPF0004"/>
    <property type="match status" value="1"/>
</dbReference>
<dbReference type="SFLD" id="SFLDG01082">
    <property type="entry name" value="B12-binding_domain_containing"/>
    <property type="match status" value="1"/>
</dbReference>
<dbReference type="SFLD" id="SFLDS00029">
    <property type="entry name" value="Radical_SAM"/>
    <property type="match status" value="1"/>
</dbReference>
<dbReference type="SFLD" id="SFLDF00274">
    <property type="entry name" value="ribosomal_protein_S12_methylth"/>
    <property type="match status" value="1"/>
</dbReference>
<dbReference type="SMART" id="SM00729">
    <property type="entry name" value="Elp3"/>
    <property type="match status" value="1"/>
</dbReference>
<dbReference type="SUPFAM" id="SSF102114">
    <property type="entry name" value="Radical SAM enzymes"/>
    <property type="match status" value="1"/>
</dbReference>
<dbReference type="PROSITE" id="PS51449">
    <property type="entry name" value="MTTASE_N"/>
    <property type="match status" value="1"/>
</dbReference>
<dbReference type="PROSITE" id="PS01278">
    <property type="entry name" value="MTTASE_RADICAL"/>
    <property type="match status" value="1"/>
</dbReference>
<dbReference type="PROSITE" id="PS51918">
    <property type="entry name" value="RADICAL_SAM"/>
    <property type="match status" value="1"/>
</dbReference>
<dbReference type="PROSITE" id="PS50926">
    <property type="entry name" value="TRAM"/>
    <property type="match status" value="1"/>
</dbReference>
<feature type="chain" id="PRO_0000374929" description="Ribosomal protein uS12 methylthiotransferase RimO">
    <location>
        <begin position="1"/>
        <end position="454"/>
    </location>
</feature>
<feature type="domain" description="MTTase N-terminal" evidence="1">
    <location>
        <begin position="14"/>
        <end position="125"/>
    </location>
</feature>
<feature type="domain" description="Radical SAM core" evidence="2">
    <location>
        <begin position="149"/>
        <end position="378"/>
    </location>
</feature>
<feature type="domain" description="TRAM" evidence="1">
    <location>
        <begin position="381"/>
        <end position="452"/>
    </location>
</feature>
<feature type="binding site" evidence="1">
    <location>
        <position position="23"/>
    </location>
    <ligand>
        <name>[4Fe-4S] cluster</name>
        <dbReference type="ChEBI" id="CHEBI:49883"/>
        <label>1</label>
    </ligand>
</feature>
<feature type="binding site" evidence="1">
    <location>
        <position position="59"/>
    </location>
    <ligand>
        <name>[4Fe-4S] cluster</name>
        <dbReference type="ChEBI" id="CHEBI:49883"/>
        <label>1</label>
    </ligand>
</feature>
<feature type="binding site" evidence="1">
    <location>
        <position position="88"/>
    </location>
    <ligand>
        <name>[4Fe-4S] cluster</name>
        <dbReference type="ChEBI" id="CHEBI:49883"/>
        <label>1</label>
    </ligand>
</feature>
<feature type="binding site" evidence="1">
    <location>
        <position position="163"/>
    </location>
    <ligand>
        <name>[4Fe-4S] cluster</name>
        <dbReference type="ChEBI" id="CHEBI:49883"/>
        <label>2</label>
        <note>4Fe-4S-S-AdoMet</note>
    </ligand>
</feature>
<feature type="binding site" evidence="1">
    <location>
        <position position="167"/>
    </location>
    <ligand>
        <name>[4Fe-4S] cluster</name>
        <dbReference type="ChEBI" id="CHEBI:49883"/>
        <label>2</label>
        <note>4Fe-4S-S-AdoMet</note>
    </ligand>
</feature>
<feature type="binding site" evidence="1">
    <location>
        <position position="170"/>
    </location>
    <ligand>
        <name>[4Fe-4S] cluster</name>
        <dbReference type="ChEBI" id="CHEBI:49883"/>
        <label>2</label>
        <note>4Fe-4S-S-AdoMet</note>
    </ligand>
</feature>
<protein>
    <recommendedName>
        <fullName evidence="1">Ribosomal protein uS12 methylthiotransferase RimO</fullName>
        <shortName evidence="1">uS12 MTTase</shortName>
        <shortName evidence="1">uS12 methylthiotransferase</shortName>
        <ecNumber evidence="1">2.8.4.4</ecNumber>
    </recommendedName>
    <alternativeName>
        <fullName evidence="1">Ribosomal protein uS12 (aspartate-C(3))-methylthiotransferase</fullName>
    </alternativeName>
    <alternativeName>
        <fullName evidence="1">Ribosome maturation factor RimO</fullName>
    </alternativeName>
</protein>
<gene>
    <name evidence="1" type="primary">rimO</name>
    <name type="ordered locus">P9301_01171</name>
</gene>
<evidence type="ECO:0000255" key="1">
    <source>
        <dbReference type="HAMAP-Rule" id="MF_01865"/>
    </source>
</evidence>
<evidence type="ECO:0000255" key="2">
    <source>
        <dbReference type="PROSITE-ProRule" id="PRU01266"/>
    </source>
</evidence>
<comment type="function">
    <text evidence="1">Catalyzes the methylthiolation of an aspartic acid residue of ribosomal protein uS12.</text>
</comment>
<comment type="catalytic activity">
    <reaction evidence="1">
        <text>L-aspartate(89)-[ribosomal protein uS12]-hydrogen + (sulfur carrier)-SH + AH2 + 2 S-adenosyl-L-methionine = 3-methylsulfanyl-L-aspartate(89)-[ribosomal protein uS12]-hydrogen + (sulfur carrier)-H + 5'-deoxyadenosine + L-methionine + A + S-adenosyl-L-homocysteine + 2 H(+)</text>
        <dbReference type="Rhea" id="RHEA:37087"/>
        <dbReference type="Rhea" id="RHEA-COMP:10460"/>
        <dbReference type="Rhea" id="RHEA-COMP:10461"/>
        <dbReference type="Rhea" id="RHEA-COMP:14737"/>
        <dbReference type="Rhea" id="RHEA-COMP:14739"/>
        <dbReference type="ChEBI" id="CHEBI:13193"/>
        <dbReference type="ChEBI" id="CHEBI:15378"/>
        <dbReference type="ChEBI" id="CHEBI:17319"/>
        <dbReference type="ChEBI" id="CHEBI:17499"/>
        <dbReference type="ChEBI" id="CHEBI:29917"/>
        <dbReference type="ChEBI" id="CHEBI:29961"/>
        <dbReference type="ChEBI" id="CHEBI:57844"/>
        <dbReference type="ChEBI" id="CHEBI:57856"/>
        <dbReference type="ChEBI" id="CHEBI:59789"/>
        <dbReference type="ChEBI" id="CHEBI:64428"/>
        <dbReference type="ChEBI" id="CHEBI:73599"/>
        <dbReference type="EC" id="2.8.4.4"/>
    </reaction>
</comment>
<comment type="cofactor">
    <cofactor evidence="1">
        <name>[4Fe-4S] cluster</name>
        <dbReference type="ChEBI" id="CHEBI:49883"/>
    </cofactor>
    <text evidence="1">Binds 2 [4Fe-4S] clusters. One cluster is coordinated with 3 cysteines and an exchangeable S-adenosyl-L-methionine.</text>
</comment>
<comment type="subcellular location">
    <subcellularLocation>
        <location evidence="1">Cytoplasm</location>
    </subcellularLocation>
</comment>
<comment type="similarity">
    <text evidence="1">Belongs to the methylthiotransferase family. RimO subfamily.</text>
</comment>
<reference key="1">
    <citation type="journal article" date="2007" name="PLoS Genet.">
        <title>Patterns and implications of gene gain and loss in the evolution of Prochlorococcus.</title>
        <authorList>
            <person name="Kettler G.C."/>
            <person name="Martiny A.C."/>
            <person name="Huang K."/>
            <person name="Zucker J."/>
            <person name="Coleman M.L."/>
            <person name="Rodrigue S."/>
            <person name="Chen F."/>
            <person name="Lapidus A."/>
            <person name="Ferriera S."/>
            <person name="Johnson J."/>
            <person name="Steglich C."/>
            <person name="Church G.M."/>
            <person name="Richardson P."/>
            <person name="Chisholm S.W."/>
        </authorList>
    </citation>
    <scope>NUCLEOTIDE SEQUENCE [LARGE SCALE GENOMIC DNA]</scope>
    <source>
        <strain>MIT 9301</strain>
    </source>
</reference>
<sequence>MKQNSLNVKQKKLSKIAFSHVGCEKNLVDTEHMQGLLHKEGYEVDSNINDANVVVVNTCSFIETAREESIRKILEYTNQGKEVIVAGCMAQHFKDELIKEIPEIKGLVGTGDYQKIAKVLDRVEKGEIVNEVSKIPEFIADEEMPRFVDKNKFVAYLRIAEGCNYNCAFCIIPKLRGPQRSRTIESILSEAKSLAKKGIQEIILISQITTNYGQDIYGKPSLAKLLNELSKVPIPWIRIHYAYPTGLTDEVIRAFKDSKNIVPYFDLPLQHSHPDVLKSMNRPWQASLNESILEKIREEIPSAVLRTSLIVGFPGEKKEHFEHLLQFLDRHKFDHVGVFIFSPEEGTAAFHLPNKVSPEVAEARKDNVISVQQNISREKNQIYVGSKMKIMVEQISDNNELIGRSYNFAPEIDGTVILSVKEKIDLKNYIGKFVEANISFADEYDLYGETIKIL</sequence>
<keyword id="KW-0004">4Fe-4S</keyword>
<keyword id="KW-0963">Cytoplasm</keyword>
<keyword id="KW-0408">Iron</keyword>
<keyword id="KW-0411">Iron-sulfur</keyword>
<keyword id="KW-0479">Metal-binding</keyword>
<keyword id="KW-1185">Reference proteome</keyword>
<keyword id="KW-0949">S-adenosyl-L-methionine</keyword>
<keyword id="KW-0808">Transferase</keyword>
<organism>
    <name type="scientific">Prochlorococcus marinus (strain MIT 9301)</name>
    <dbReference type="NCBI Taxonomy" id="167546"/>
    <lineage>
        <taxon>Bacteria</taxon>
        <taxon>Bacillati</taxon>
        <taxon>Cyanobacteriota</taxon>
        <taxon>Cyanophyceae</taxon>
        <taxon>Synechococcales</taxon>
        <taxon>Prochlorococcaceae</taxon>
        <taxon>Prochlorococcus</taxon>
    </lineage>
</organism>
<proteinExistence type="inferred from homology"/>